<organism>
    <name type="scientific">Pinus thunbergii</name>
    <name type="common">Japanese black pine</name>
    <name type="synonym">Pinus thunbergiana</name>
    <dbReference type="NCBI Taxonomy" id="3350"/>
    <lineage>
        <taxon>Eukaryota</taxon>
        <taxon>Viridiplantae</taxon>
        <taxon>Streptophyta</taxon>
        <taxon>Embryophyta</taxon>
        <taxon>Tracheophyta</taxon>
        <taxon>Spermatophyta</taxon>
        <taxon>Pinopsida</taxon>
        <taxon>Pinidae</taxon>
        <taxon>Conifers I</taxon>
        <taxon>Pinales</taxon>
        <taxon>Pinaceae</taxon>
        <taxon>Pinus</taxon>
        <taxon>Pinus subgen. Pinus</taxon>
    </lineage>
</organism>
<protein>
    <recommendedName>
        <fullName evidence="1">Maturase K</fullName>
    </recommendedName>
    <alternativeName>
        <fullName evidence="1">Intron maturase</fullName>
    </alternativeName>
</protein>
<reference key="1">
    <citation type="journal article" date="1992" name="Mol. Gen. Genet.">
        <title>Chloroplast DNA of black pine retains a residual inverted repeat lacking rRNA genes: nucleotide sequences of trnQ, trnK, psbA, trnI and trnH and the absence of rps16.</title>
        <authorList>
            <person name="Tsudzuki J."/>
            <person name="Nakashima K."/>
            <person name="Tsudzuki T."/>
            <person name="Hiratsuka J."/>
            <person name="Shibata M."/>
            <person name="Wakasugi T."/>
            <person name="Sugiura M."/>
        </authorList>
    </citation>
    <scope>NUCLEOTIDE SEQUENCE [GENOMIC DNA]</scope>
</reference>
<reference key="2">
    <citation type="journal article" date="1994" name="Proc. Natl. Acad. Sci. U.S.A.">
        <title>Loss of all ndh genes as determined by sequencing the entire chloroplast genome of the black pine Pinus thunbergii.</title>
        <authorList>
            <person name="Wakasugi T."/>
            <person name="Tsudzuki J."/>
            <person name="Ito S."/>
            <person name="Nakashima K."/>
            <person name="Tsudzuki T."/>
            <person name="Sugiura M."/>
        </authorList>
    </citation>
    <scope>NUCLEOTIDE SEQUENCE [LARGE SCALE GENOMIC DNA]</scope>
</reference>
<keyword id="KW-0150">Chloroplast</keyword>
<keyword id="KW-0507">mRNA processing</keyword>
<keyword id="KW-0934">Plastid</keyword>
<keyword id="KW-0694">RNA-binding</keyword>
<keyword id="KW-0819">tRNA processing</keyword>
<sequence length="515" mass="60794">MDEFHRCGKEDSFWQQCFLYPLFFQEDLYAISHDHYLDVSSSSRPMEHLSSNDQLSFLTVKRLIGQIRQQNHSIVLFVNCDPNPLADRKKSFYSESVLEALTLVLEVPFSIWSKSSVEGMNECKSFRSIHSIFPFLEDKFPHSNSILDARIPYSIHPEILVRTFRRWIRDAPSLHPLRSVLYDYRNSPENLQRSIIVVPRVNTRFFLFLLNYYVCECESILFSRLKRSSHSRSLSHGSFPQRTHFHRKIKHIIIFSRRNSLKSIWSLKDPKIHYVRYGERPIIAIKGADLLVKKCRYYLLIFRQFYFHLWSEPYRVCSHQLSKNCSSSPGYFLRVRMNPLLVRTKTLDELFIPVLITNEMDPIVPIVPIIGLLATEKFCDISGRPISKLSWTSLTDDDILDRFDQIWRNLFHYYSGSFDRDGLYRIKYILLLSCAKTLACKHKSTIRVVRKELGPELFKKSFSKEREFDSLPFSSKAAARSQRERIWHSDIPQINPLANSWQKIQDLKIENLFDQ</sequence>
<dbReference type="EMBL" id="D11467">
    <property type="protein sequence ID" value="BAA02022.1"/>
    <property type="molecule type" value="Genomic_DNA"/>
</dbReference>
<dbReference type="EMBL" id="D17510">
    <property type="protein sequence ID" value="BAA04308.1"/>
    <property type="molecule type" value="Genomic_DNA"/>
</dbReference>
<dbReference type="PIR" id="S20449">
    <property type="entry name" value="S20449"/>
</dbReference>
<dbReference type="RefSeq" id="NP_042349.1">
    <property type="nucleotide sequence ID" value="NC_001631.1"/>
</dbReference>
<dbReference type="GeneID" id="809002"/>
<dbReference type="GO" id="GO:0009507">
    <property type="term" value="C:chloroplast"/>
    <property type="evidence" value="ECO:0007669"/>
    <property type="project" value="UniProtKB-SubCell"/>
</dbReference>
<dbReference type="GO" id="GO:0003723">
    <property type="term" value="F:RNA binding"/>
    <property type="evidence" value="ECO:0007669"/>
    <property type="project" value="UniProtKB-KW"/>
</dbReference>
<dbReference type="GO" id="GO:0006397">
    <property type="term" value="P:mRNA processing"/>
    <property type="evidence" value="ECO:0007669"/>
    <property type="project" value="UniProtKB-KW"/>
</dbReference>
<dbReference type="GO" id="GO:0008380">
    <property type="term" value="P:RNA splicing"/>
    <property type="evidence" value="ECO:0007669"/>
    <property type="project" value="UniProtKB-UniRule"/>
</dbReference>
<dbReference type="GO" id="GO:0008033">
    <property type="term" value="P:tRNA processing"/>
    <property type="evidence" value="ECO:0007669"/>
    <property type="project" value="UniProtKB-KW"/>
</dbReference>
<dbReference type="HAMAP" id="MF_01390">
    <property type="entry name" value="MatK"/>
    <property type="match status" value="1"/>
</dbReference>
<dbReference type="InterPro" id="IPR024937">
    <property type="entry name" value="Domain_X"/>
</dbReference>
<dbReference type="InterPro" id="IPR002866">
    <property type="entry name" value="Maturase_MatK"/>
</dbReference>
<dbReference type="InterPro" id="IPR024942">
    <property type="entry name" value="Maturase_MatK_N"/>
</dbReference>
<dbReference type="PANTHER" id="PTHR34811">
    <property type="entry name" value="MATURASE K"/>
    <property type="match status" value="1"/>
</dbReference>
<dbReference type="PANTHER" id="PTHR34811:SF1">
    <property type="entry name" value="MATURASE K"/>
    <property type="match status" value="1"/>
</dbReference>
<dbReference type="Pfam" id="PF01348">
    <property type="entry name" value="Intron_maturas2"/>
    <property type="match status" value="1"/>
</dbReference>
<dbReference type="Pfam" id="PF01824">
    <property type="entry name" value="MatK_N"/>
    <property type="match status" value="1"/>
</dbReference>
<name>MATK_PINTH</name>
<feature type="chain" id="PRO_0000143635" description="Maturase K">
    <location>
        <begin position="1"/>
        <end position="515"/>
    </location>
</feature>
<proteinExistence type="inferred from homology"/>
<geneLocation type="chloroplast"/>
<evidence type="ECO:0000255" key="1">
    <source>
        <dbReference type="HAMAP-Rule" id="MF_01390"/>
    </source>
</evidence>
<comment type="function">
    <text evidence="1">Usually encoded in the trnK tRNA gene intron. Probably assists in splicing its own and other chloroplast group II introns.</text>
</comment>
<comment type="subcellular location">
    <subcellularLocation>
        <location>Plastid</location>
        <location>Chloroplast</location>
    </subcellularLocation>
</comment>
<comment type="similarity">
    <text evidence="1">Belongs to the intron maturase 2 family. MatK subfamily.</text>
</comment>
<gene>
    <name evidence="1" type="primary">matK</name>
    <name type="synonym">ycf14</name>
</gene>
<accession>Q00866</accession>